<keyword id="KW-0007">Acetylation</keyword>
<keyword id="KW-0053">Apoptosis</keyword>
<keyword id="KW-0963">Cytoplasm</keyword>
<keyword id="KW-0903">Direct protein sequencing</keyword>
<keyword id="KW-1015">Disulfide bond</keyword>
<keyword id="KW-0325">Glycoprotein</keyword>
<keyword id="KW-0413">Isomerase</keyword>
<keyword id="KW-1017">Isopeptide bond</keyword>
<keyword id="KW-0539">Nucleus</keyword>
<keyword id="KW-0597">Phosphoprotein</keyword>
<keyword id="KW-1185">Reference proteome</keyword>
<keyword id="KW-0697">Rotamase</keyword>
<keyword id="KW-0964">Secreted</keyword>
<keyword id="KW-0832">Ubl conjugation</keyword>
<proteinExistence type="evidence at protein level"/>
<reference key="1">
    <citation type="submission" date="2003-04" db="EMBL/GenBank/DDBJ databases">
        <authorList>
            <person name="Ren Z."/>
            <person name="Wang J."/>
            <person name="Chen J."/>
            <person name="Xiao Y."/>
            <person name="Zhang W."/>
            <person name="Sun D."/>
        </authorList>
    </citation>
    <scope>NUCLEOTIDE SEQUENCE [MRNA]</scope>
</reference>
<reference key="2">
    <citation type="journal article" date="1989" name="Nature">
        <title>Peptidyl-prolyl cis-trans isomerase is the cyclosporin A-binding protein cyclophilin.</title>
        <authorList>
            <person name="Takahashi N."/>
            <person name="Hayano T."/>
            <person name="Suzuki M."/>
        </authorList>
    </citation>
    <scope>PROTEIN SEQUENCE OF 2-164</scope>
    <source>
        <tissue>Kidney</tissue>
    </source>
</reference>
<reference key="3">
    <citation type="journal article" date="1996" name="Mamm. Genome">
        <title>Evaluation and characterization of a porcine small intestine cDNA library: analysis of 839 clones.</title>
        <authorList>
            <person name="Winteroe A.K."/>
            <person name="Fredholm M."/>
            <person name="Davies W."/>
        </authorList>
    </citation>
    <scope>NUCLEOTIDE SEQUENCE [LARGE SCALE MRNA] OF 1-127</scope>
    <source>
        <tissue>Small intestine</tissue>
    </source>
</reference>
<reference key="4">
    <citation type="journal article" date="1989" name="Nature">
        <title>Cyclophilin and peptidyl-prolyl cis-trans isomerase are probably identical proteins.</title>
        <authorList>
            <person name="Fischer G."/>
            <person name="Wittmann-Liebold B."/>
            <person name="Lang K."/>
            <person name="Kiefhaber T."/>
            <person name="Schmid F.X."/>
        </authorList>
    </citation>
    <scope>PROTEIN SEQUENCE OF 2-39</scope>
    <source>
        <tissue>Kidney</tissue>
    </source>
</reference>
<accession>P62936</accession>
<accession>P04374</accession>
<accession>P10110</accession>
<accession>Q29580</accession>
<accession>Q53ZT4</accession>
<protein>
    <recommendedName>
        <fullName>Peptidyl-prolyl cis-trans isomerase A</fullName>
        <shortName>PPIase A</shortName>
        <ecNumber evidence="2">5.2.1.8</ecNumber>
    </recommendedName>
    <alternativeName>
        <fullName>Cyclophilin A</fullName>
    </alternativeName>
    <alternativeName>
        <fullName>Cyclosporin A-binding protein</fullName>
    </alternativeName>
    <alternativeName>
        <fullName>Rotamase A</fullName>
    </alternativeName>
    <component>
        <recommendedName>
            <fullName>Peptidyl-prolyl cis-trans isomerase A, N-terminally processed</fullName>
        </recommendedName>
    </component>
</protein>
<organism>
    <name type="scientific">Sus scrofa</name>
    <name type="common">Pig</name>
    <dbReference type="NCBI Taxonomy" id="9823"/>
    <lineage>
        <taxon>Eukaryota</taxon>
        <taxon>Metazoa</taxon>
        <taxon>Chordata</taxon>
        <taxon>Craniata</taxon>
        <taxon>Vertebrata</taxon>
        <taxon>Euteleostomi</taxon>
        <taxon>Mammalia</taxon>
        <taxon>Eutheria</taxon>
        <taxon>Laurasiatheria</taxon>
        <taxon>Artiodactyla</taxon>
        <taxon>Suina</taxon>
        <taxon>Suidae</taxon>
        <taxon>Sus</taxon>
    </lineage>
</organism>
<dbReference type="EC" id="5.2.1.8" evidence="2"/>
<dbReference type="EMBL" id="AY266299">
    <property type="protein sequence ID" value="AAP22037.1"/>
    <property type="molecule type" value="mRNA"/>
</dbReference>
<dbReference type="EMBL" id="F14571">
    <property type="protein sequence ID" value="CAA23130.1"/>
    <property type="molecule type" value="mRNA"/>
</dbReference>
<dbReference type="PIR" id="S02172">
    <property type="entry name" value="CSPGA"/>
</dbReference>
<dbReference type="RefSeq" id="NP_999518.1">
    <property type="nucleotide sequence ID" value="NM_214353.1"/>
</dbReference>
<dbReference type="BMRB" id="P62936"/>
<dbReference type="SMR" id="P62936"/>
<dbReference type="FunCoup" id="P62936">
    <property type="interactions" value="1724"/>
</dbReference>
<dbReference type="STRING" id="9823.ENSSSCP00000017727"/>
<dbReference type="GlyCosmos" id="P62936">
    <property type="glycosylation" value="1 site, No reported glycans"/>
</dbReference>
<dbReference type="GlyGen" id="P62936">
    <property type="glycosylation" value="1 site"/>
</dbReference>
<dbReference type="PaxDb" id="9823-ENSSSCP00000017727"/>
<dbReference type="PeptideAtlas" id="P62936"/>
<dbReference type="Ensembl" id="ENSSSCT00000018219.5">
    <property type="protein sequence ID" value="ENSSSCP00000017727.4"/>
    <property type="gene ID" value="ENSSSCG00000016737.5"/>
</dbReference>
<dbReference type="Ensembl" id="ENSSSCT00000085168.2">
    <property type="protein sequence ID" value="ENSSSCP00000063801.2"/>
    <property type="gene ID" value="ENSSSCG00000016737.5"/>
</dbReference>
<dbReference type="Ensembl" id="ENSSSCT00070030998.1">
    <property type="protein sequence ID" value="ENSSSCP00070025855.1"/>
    <property type="gene ID" value="ENSSSCG00070015771.1"/>
</dbReference>
<dbReference type="Ensembl" id="ENSSSCT00070031011.1">
    <property type="protein sequence ID" value="ENSSSCP00070025867.1"/>
    <property type="gene ID" value="ENSSSCG00070015771.1"/>
</dbReference>
<dbReference type="Ensembl" id="ENSSSCT00085003220">
    <property type="protein sequence ID" value="ENSSSCP00085002343"/>
    <property type="gene ID" value="ENSSSCG00085001967"/>
</dbReference>
<dbReference type="Ensembl" id="ENSSSCT00115026990">
    <property type="protein sequence ID" value="ENSSSCP00115025577"/>
    <property type="gene ID" value="ENSSSCG00115015491"/>
</dbReference>
<dbReference type="GeneID" id="397637"/>
<dbReference type="KEGG" id="ssc:397637"/>
<dbReference type="CTD" id="5478"/>
<dbReference type="VGNC" id="VGNC:111818">
    <property type="gene designation" value="PPIA"/>
</dbReference>
<dbReference type="eggNOG" id="KOG0865">
    <property type="taxonomic scope" value="Eukaryota"/>
</dbReference>
<dbReference type="GeneTree" id="ENSGT00950000183087"/>
<dbReference type="HOGENOM" id="CLU_012062_4_3_1"/>
<dbReference type="InParanoid" id="P62936"/>
<dbReference type="OMA" id="CVSIYGH"/>
<dbReference type="OrthoDB" id="9768325at2759"/>
<dbReference type="TreeFam" id="TF316719"/>
<dbReference type="Reactome" id="R-SSC-210991">
    <property type="pathway name" value="Basigin interactions"/>
</dbReference>
<dbReference type="Reactome" id="R-SSC-6798695">
    <property type="pathway name" value="Neutrophil degranulation"/>
</dbReference>
<dbReference type="Proteomes" id="UP000008227">
    <property type="component" value="Chromosome 18"/>
</dbReference>
<dbReference type="Proteomes" id="UP000314985">
    <property type="component" value="Chromosome 18"/>
</dbReference>
<dbReference type="Proteomes" id="UP000694570">
    <property type="component" value="Unplaced"/>
</dbReference>
<dbReference type="Proteomes" id="UP000694571">
    <property type="component" value="Unplaced"/>
</dbReference>
<dbReference type="Proteomes" id="UP000694720">
    <property type="component" value="Unplaced"/>
</dbReference>
<dbReference type="Proteomes" id="UP000694722">
    <property type="component" value="Unplaced"/>
</dbReference>
<dbReference type="Proteomes" id="UP000694723">
    <property type="component" value="Unplaced"/>
</dbReference>
<dbReference type="Proteomes" id="UP000694724">
    <property type="component" value="Unplaced"/>
</dbReference>
<dbReference type="Proteomes" id="UP000694725">
    <property type="component" value="Unplaced"/>
</dbReference>
<dbReference type="Proteomes" id="UP000694726">
    <property type="component" value="Unplaced"/>
</dbReference>
<dbReference type="Proteomes" id="UP000694727">
    <property type="component" value="Unplaced"/>
</dbReference>
<dbReference type="Proteomes" id="UP000694728">
    <property type="component" value="Unplaced"/>
</dbReference>
<dbReference type="GO" id="GO:0005737">
    <property type="term" value="C:cytoplasm"/>
    <property type="evidence" value="ECO:0000250"/>
    <property type="project" value="UniProtKB"/>
</dbReference>
<dbReference type="GO" id="GO:0005829">
    <property type="term" value="C:cytosol"/>
    <property type="evidence" value="ECO:0000250"/>
    <property type="project" value="UniProtKB"/>
</dbReference>
<dbReference type="GO" id="GO:0005576">
    <property type="term" value="C:extracellular region"/>
    <property type="evidence" value="ECO:0000250"/>
    <property type="project" value="UniProtKB"/>
</dbReference>
<dbReference type="GO" id="GO:0005634">
    <property type="term" value="C:nucleus"/>
    <property type="evidence" value="ECO:0000250"/>
    <property type="project" value="UniProtKB"/>
</dbReference>
<dbReference type="GO" id="GO:1904399">
    <property type="term" value="F:heparan sulfate binding"/>
    <property type="evidence" value="ECO:0000250"/>
    <property type="project" value="UniProtKB"/>
</dbReference>
<dbReference type="GO" id="GO:0005178">
    <property type="term" value="F:integrin binding"/>
    <property type="evidence" value="ECO:0000250"/>
    <property type="project" value="UniProtKB"/>
</dbReference>
<dbReference type="GO" id="GO:0003755">
    <property type="term" value="F:peptidyl-prolyl cis-trans isomerase activity"/>
    <property type="evidence" value="ECO:0000250"/>
    <property type="project" value="UniProtKB"/>
</dbReference>
<dbReference type="GO" id="GO:0032148">
    <property type="term" value="P:activation of protein kinase B activity"/>
    <property type="evidence" value="ECO:0000250"/>
    <property type="project" value="UniProtKB"/>
</dbReference>
<dbReference type="GO" id="GO:0006915">
    <property type="term" value="P:apoptotic process"/>
    <property type="evidence" value="ECO:0000250"/>
    <property type="project" value="UniProtKB"/>
</dbReference>
<dbReference type="GO" id="GO:0060352">
    <property type="term" value="P:cell adhesion molecule production"/>
    <property type="evidence" value="ECO:0000250"/>
    <property type="project" value="UniProtKB"/>
</dbReference>
<dbReference type="GO" id="GO:0034599">
    <property type="term" value="P:cellular response to oxidative stress"/>
    <property type="evidence" value="ECO:0000250"/>
    <property type="project" value="UniProtKB"/>
</dbReference>
<dbReference type="GO" id="GO:0042118">
    <property type="term" value="P:endothelial cell activation"/>
    <property type="evidence" value="ECO:0000250"/>
    <property type="project" value="UniProtKB"/>
</dbReference>
<dbReference type="GO" id="GO:0030595">
    <property type="term" value="P:leukocyte chemotaxis"/>
    <property type="evidence" value="ECO:0000250"/>
    <property type="project" value="UniProtKB"/>
</dbReference>
<dbReference type="GO" id="GO:1902176">
    <property type="term" value="P:negative regulation of oxidative stress-induced intrinsic apoptotic signaling pathway"/>
    <property type="evidence" value="ECO:0000250"/>
    <property type="project" value="UniProtKB"/>
</dbReference>
<dbReference type="GO" id="GO:0061944">
    <property type="term" value="P:negative regulation of protein K48-linked ubiquitination"/>
    <property type="evidence" value="ECO:0000250"/>
    <property type="project" value="UniProtKB"/>
</dbReference>
<dbReference type="GO" id="GO:0006469">
    <property type="term" value="P:negative regulation of protein kinase activity"/>
    <property type="evidence" value="ECO:0000250"/>
    <property type="project" value="UniProtKB"/>
</dbReference>
<dbReference type="GO" id="GO:0001933">
    <property type="term" value="P:negative regulation of protein phosphorylation"/>
    <property type="evidence" value="ECO:0000250"/>
    <property type="project" value="UniProtKB"/>
</dbReference>
<dbReference type="GO" id="GO:0032873">
    <property type="term" value="P:negative regulation of stress-activated MAPK cascade"/>
    <property type="evidence" value="ECO:0000250"/>
    <property type="project" value="UniProtKB"/>
</dbReference>
<dbReference type="GO" id="GO:0030593">
    <property type="term" value="P:neutrophil chemotaxis"/>
    <property type="evidence" value="ECO:0000250"/>
    <property type="project" value="UniProtKB"/>
</dbReference>
<dbReference type="GO" id="GO:0030168">
    <property type="term" value="P:platelet activation"/>
    <property type="evidence" value="ECO:0000250"/>
    <property type="project" value="UniProtKB"/>
</dbReference>
<dbReference type="GO" id="GO:0070527">
    <property type="term" value="P:platelet aggregation"/>
    <property type="evidence" value="ECO:0000250"/>
    <property type="project" value="UniProtKB"/>
</dbReference>
<dbReference type="GO" id="GO:0043410">
    <property type="term" value="P:positive regulation of MAPK cascade"/>
    <property type="evidence" value="ECO:0000250"/>
    <property type="project" value="UniProtKB"/>
</dbReference>
<dbReference type="GO" id="GO:0051092">
    <property type="term" value="P:positive regulation of NF-kappaB transcription factor activity"/>
    <property type="evidence" value="ECO:0000250"/>
    <property type="project" value="UniProtKB"/>
</dbReference>
<dbReference type="GO" id="GO:0001934">
    <property type="term" value="P:positive regulation of protein phosphorylation"/>
    <property type="evidence" value="ECO:0000250"/>
    <property type="project" value="UniProtKB"/>
</dbReference>
<dbReference type="GO" id="GO:0006457">
    <property type="term" value="P:protein folding"/>
    <property type="evidence" value="ECO:0007669"/>
    <property type="project" value="InterPro"/>
</dbReference>
<dbReference type="GO" id="GO:0000413">
    <property type="term" value="P:protein peptidyl-prolyl isomerization"/>
    <property type="evidence" value="ECO:0000250"/>
    <property type="project" value="UniProtKB"/>
</dbReference>
<dbReference type="GO" id="GO:2001233">
    <property type="term" value="P:regulation of apoptotic signaling pathway"/>
    <property type="evidence" value="ECO:0000250"/>
    <property type="project" value="UniProtKB"/>
</dbReference>
<dbReference type="GO" id="GO:0045069">
    <property type="term" value="P:regulation of viral genome replication"/>
    <property type="evidence" value="ECO:0000250"/>
    <property type="project" value="UniProtKB"/>
</dbReference>
<dbReference type="CDD" id="cd01926">
    <property type="entry name" value="cyclophilin_ABH_like"/>
    <property type="match status" value="1"/>
</dbReference>
<dbReference type="FunFam" id="2.40.100.10:FF:000011">
    <property type="entry name" value="Peptidyl-prolyl cis-trans isomerase A"/>
    <property type="match status" value="1"/>
</dbReference>
<dbReference type="Gene3D" id="2.40.100.10">
    <property type="entry name" value="Cyclophilin-like"/>
    <property type="match status" value="1"/>
</dbReference>
<dbReference type="InterPro" id="IPR029000">
    <property type="entry name" value="Cyclophilin-like_dom_sf"/>
</dbReference>
<dbReference type="InterPro" id="IPR024936">
    <property type="entry name" value="Cyclophilin-type_PPIase"/>
</dbReference>
<dbReference type="InterPro" id="IPR020892">
    <property type="entry name" value="Cyclophilin-type_PPIase_CS"/>
</dbReference>
<dbReference type="InterPro" id="IPR002130">
    <property type="entry name" value="Cyclophilin-type_PPIase_dom"/>
</dbReference>
<dbReference type="PANTHER" id="PTHR11071">
    <property type="entry name" value="PEPTIDYL-PROLYL CIS-TRANS ISOMERASE"/>
    <property type="match status" value="1"/>
</dbReference>
<dbReference type="PANTHER" id="PTHR11071:SF490">
    <property type="entry name" value="PEPTIDYL-PROLYL CIS-TRANS ISOMERASE A"/>
    <property type="match status" value="1"/>
</dbReference>
<dbReference type="Pfam" id="PF00160">
    <property type="entry name" value="Pro_isomerase"/>
    <property type="match status" value="1"/>
</dbReference>
<dbReference type="PIRSF" id="PIRSF001467">
    <property type="entry name" value="Peptidylpro_ismrse"/>
    <property type="match status" value="1"/>
</dbReference>
<dbReference type="PRINTS" id="PR00153">
    <property type="entry name" value="CSAPPISMRASE"/>
</dbReference>
<dbReference type="SUPFAM" id="SSF50891">
    <property type="entry name" value="Cyclophilin-like"/>
    <property type="match status" value="1"/>
</dbReference>
<dbReference type="PROSITE" id="PS00170">
    <property type="entry name" value="CSA_PPIASE_1"/>
    <property type="match status" value="1"/>
</dbReference>
<dbReference type="PROSITE" id="PS50072">
    <property type="entry name" value="CSA_PPIASE_2"/>
    <property type="match status" value="1"/>
</dbReference>
<name>PPIA_PIG</name>
<evidence type="ECO:0000250" key="1">
    <source>
        <dbReference type="UniProtKB" id="P17742"/>
    </source>
</evidence>
<evidence type="ECO:0000250" key="2">
    <source>
        <dbReference type="UniProtKB" id="P62937"/>
    </source>
</evidence>
<evidence type="ECO:0000255" key="3"/>
<evidence type="ECO:0000255" key="4">
    <source>
        <dbReference type="PROSITE-ProRule" id="PRU00156"/>
    </source>
</evidence>
<evidence type="ECO:0000269" key="5">
    <source>
    </source>
</evidence>
<evidence type="ECO:0000269" key="6">
    <source>
    </source>
</evidence>
<evidence type="ECO:0000305" key="7"/>
<comment type="function">
    <text evidence="1 2">Catalyzes the cis-trans isomerization of proline imidic peptide bonds in oligopeptides (By similarity). Exerts a strong chemotactic effect on leukocytes partly through activation of one of its membrane receptors BSG/CD147, initiating a signaling cascade that culminates in MAPK/ERK activation (By similarity). Activates endothelial cells (ECs) in a proinflammatory manner by stimulating activation of NF-kappa-B and ERK, JNK and p38 MAP-kinases and by inducing expression of adhesion molecules including SELE and VCAM1 (By similarity). Induces apoptosis in ECs by promoting the FOXO1-dependent expression of CCL2 and BCL2L11 which are involved in EC chemotaxis and apoptosis (By similarity). In response to oxidative stress, initiates proapoptotic and antiapoptotic signaling in ECs via activation of NF-kappa-B and AKT1 and up-regulation of antiapoptotic protein BCL2 (By similarity). Negatively regulates MAP3K5/ASK1 kinase activity, autophosphorylation and oxidative stress-induced apoptosis mediated by MAP3K5/ASK1 (By similarity). Necessary for the assembly of TARDBP in heterogeneous nuclear ribonucleoprotein (hnRNP) complexes and regulates TARDBP binding to RNA UG repeats and TARDBP-dependent expression of HDAC6, ATG7 and VCP which are involved in clearance of protein aggregates (By similarity). Plays an important role in platelet activation and aggregation (By similarity). Regulates calcium mobilization and integrin ITGA2B:ITGB3 bidirectional signaling via increased ROS production as well as by facilitating the interaction between integrin and the cell cytoskeleton (By similarity). Binds heparan sulfate glycosaminoglycans (By similarity).</text>
</comment>
<comment type="catalytic activity">
    <reaction evidence="2">
        <text>[protein]-peptidylproline (omega=180) = [protein]-peptidylproline (omega=0)</text>
        <dbReference type="Rhea" id="RHEA:16237"/>
        <dbReference type="Rhea" id="RHEA-COMP:10747"/>
        <dbReference type="Rhea" id="RHEA-COMP:10748"/>
        <dbReference type="ChEBI" id="CHEBI:83833"/>
        <dbReference type="ChEBI" id="CHEBI:83834"/>
        <dbReference type="EC" id="5.2.1.8"/>
    </reaction>
</comment>
<comment type="activity regulation">
    <text evidence="2">Binds cyclosporin A (CsA). CsA mediates some of its effects via an inhibitory action on PPIase.</text>
</comment>
<comment type="subunit">
    <text evidence="1 2">Interacts with protein phosphatase PPP3CA/calcineurin A (By similarity). Interacts with isoform 2 of BSG/CD147 (By similarity). Interacts with FOXO1; the interaction promotes FOXO1 dephosphorylation, nuclear accumulation and transcriptional activity (By similarity). Interacts with integrin ITGA2B:ITGB3; the interaction is ROS and peptidyl-prolyl cis-trans isomerase (PPIase) activity-dependent and is increased in the presence of thrombin (By similarity). Interacts with MAP3K5 (By similarity). Interacts with TARDBP; the interaction is dependent on the RNA-binding activity of TARDBP and the PPIase activity of PPIA/CYPA and the acetylation of PPIA/CYPA at Lys-125 favors the interaction (By similarity). Interacts with HNRNPA1, HNRNPA2B1, HNRNPC, RBMX, HNRNPK and HNRNPM (By similarity).</text>
</comment>
<comment type="subcellular location">
    <subcellularLocation>
        <location evidence="2">Cytoplasm</location>
    </subcellularLocation>
    <subcellularLocation>
        <location evidence="2">Secreted</location>
    </subcellularLocation>
    <subcellularLocation>
        <location evidence="2">Nucleus</location>
    </subcellularLocation>
    <text evidence="2">Secretion occurs in response to oxidative stress in vascular smooth muscle through a vesicular secretory pathway that involves actin remodeling and myosin II activation, and mediates ERK1/2 activation.</text>
</comment>
<comment type="PTM">
    <text evidence="2">Acetylation at Lys-125 markedly inhibits catalysis of cis to trans isomerization (By similarity). PPIA acetylation also antagonizes the immunosuppressive effects of cyclosporine by inhibiting the sequential steps of cyclosporine binding and calcineurin inhibition (By similarity). Acetylation at Lys-125 favors the interaction with TARDBP (By similarity).</text>
</comment>
<comment type="similarity">
    <text evidence="7">Belongs to the cyclophilin-type PPIase family. PPIase A subfamily.</text>
</comment>
<feature type="chain" id="PRO_0000423249" description="Peptidyl-prolyl cis-trans isomerase A">
    <location>
        <begin position="1"/>
        <end position="164"/>
    </location>
</feature>
<feature type="initiator methionine" description="Removed; alternate" evidence="2 5 6">
    <location>
        <position position="1"/>
    </location>
</feature>
<feature type="chain" id="PRO_0000064119" description="Peptidyl-prolyl cis-trans isomerase A, N-terminally processed">
    <location>
        <begin position="2"/>
        <end position="164"/>
    </location>
</feature>
<feature type="domain" description="PPIase cyclophilin-type" evidence="4">
    <location>
        <begin position="7"/>
        <end position="163"/>
    </location>
</feature>
<feature type="modified residue" description="N-acetylmethionine" evidence="2">
    <location>
        <position position="1"/>
    </location>
</feature>
<feature type="modified residue" description="N-acetylvaline; in Peptidyl-prolyl cis-trans isomerase A, N-terminally processed" evidence="2">
    <location>
        <position position="2"/>
    </location>
</feature>
<feature type="modified residue" description="N6-acetyllysine; alternate" evidence="2">
    <location>
        <position position="28"/>
    </location>
</feature>
<feature type="modified residue" description="N6-acetyllysine" evidence="2">
    <location>
        <position position="44"/>
    </location>
</feature>
<feature type="modified residue" description="N6-acetyllysine" evidence="2">
    <location>
        <position position="76"/>
    </location>
</feature>
<feature type="modified residue" description="Phosphoserine" evidence="2">
    <location>
        <position position="77"/>
    </location>
</feature>
<feature type="modified residue" description="N6-acetyllysine; alternate" evidence="2">
    <location>
        <position position="82"/>
    </location>
</feature>
<feature type="modified residue" description="Phosphothreonine" evidence="2">
    <location>
        <position position="93"/>
    </location>
</feature>
<feature type="modified residue" description="N6-acetyllysine" evidence="2">
    <location>
        <position position="125"/>
    </location>
</feature>
<feature type="modified residue" description="N6-acetyllysine" evidence="2">
    <location>
        <position position="131"/>
    </location>
</feature>
<feature type="modified residue" description="N6-acetyllysine" evidence="1">
    <location>
        <position position="133"/>
    </location>
</feature>
<feature type="glycosylation site" description="N-linked (GlcNAc...) asparagine" evidence="3">
    <location>
        <position position="108"/>
    </location>
</feature>
<feature type="disulfide bond">
    <location>
        <begin position="62"/>
        <end position="161"/>
    </location>
</feature>
<feature type="cross-link" description="Glycyl lysine isopeptide (Lys-Gly) (interchain with G-Cter in SUMO2); alternate" evidence="2">
    <location>
        <position position="28"/>
    </location>
</feature>
<feature type="cross-link" description="Glycyl lysine isopeptide (Lys-Gly) (interchain with G-Cter in ubiquitin); alternate" evidence="2">
    <location>
        <position position="28"/>
    </location>
</feature>
<feature type="cross-link" description="Glycyl lysine isopeptide (Lys-Gly) (interchain with G-Cter in SUMO2); alternate" evidence="2">
    <location>
        <position position="82"/>
    </location>
</feature>
<gene>
    <name type="primary">PPIA</name>
</gene>
<sequence>MVNPTVFFDIAVDGEPLGRVSFELFADKVPKTAENFRALSTGEKGFGYKGSCFHRIIPGFMCQGGDFTRHNGTGGKSIYGEKFDDENFILKHTGPGILSMANAGPNTNGSQFFICTAKTEWLDGKHVVFGKVKEGMNIVEAMERFGSRNGKTSKKITIADCGQI</sequence>